<protein>
    <recommendedName>
        <fullName>Uncharacterized protein YnbC</fullName>
    </recommendedName>
</protein>
<accession>P76092</accession>
<accession>Q2MBC5</accession>
<comment type="interaction">
    <interactant intactId="EBI-544837">
        <id>P76092</id>
    </interactant>
    <interactant intactId="EBI-545305">
        <id>P77398</id>
        <label>arnA</label>
    </interactant>
    <organismsDiffer>false</organismsDiffer>
    <experiments>2</experiments>
</comment>
<comment type="interaction">
    <interactant intactId="EBI-544837">
        <id>P76092</id>
    </interactant>
    <interactant intactId="EBI-549176">
        <id>P28632</id>
        <label>holD</label>
    </interactant>
    <organismsDiffer>false</organismsDiffer>
    <experiments>3</experiments>
</comment>
<comment type="interaction">
    <interactant intactId="EBI-544837">
        <id>P76092</id>
    </interactant>
    <interactant intactId="EBI-560799">
        <id>P76340</id>
        <label>hprR</label>
    </interactant>
    <organismsDiffer>false</organismsDiffer>
    <experiments>2</experiments>
</comment>
<comment type="interaction">
    <interactant intactId="EBI-544837">
        <id>P76092</id>
    </interactant>
    <interactant intactId="EBI-546919">
        <id>P13458</id>
        <label>sbcC</label>
    </interactant>
    <organismsDiffer>false</organismsDiffer>
    <experiments>3</experiments>
</comment>
<comment type="interaction">
    <interactant intactId="EBI-544837">
        <id>P76092</id>
    </interactant>
    <interactant intactId="EBI-558448">
        <id>P15082</id>
        <label>srlR</label>
    </interactant>
    <organismsDiffer>false</organismsDiffer>
    <experiments>4</experiments>
</comment>
<reference key="1">
    <citation type="submission" date="1996-05" db="EMBL/GenBank/DDBJ databases">
        <title>Nucleotide sequence of the replication terminus region of Escherichia coli.</title>
        <authorList>
            <person name="Kitakawa M."/>
            <person name="Kasai H."/>
            <person name="Baba T."/>
            <person name="Honjo A."/>
            <person name="Isono K."/>
        </authorList>
    </citation>
    <scope>NUCLEOTIDE SEQUENCE [GENOMIC DNA]</scope>
    <source>
        <strain>K12</strain>
    </source>
</reference>
<reference key="2">
    <citation type="journal article" date="1997" name="Science">
        <title>The complete genome sequence of Escherichia coli K-12.</title>
        <authorList>
            <person name="Blattner F.R."/>
            <person name="Plunkett G. III"/>
            <person name="Bloch C.A."/>
            <person name="Perna N.T."/>
            <person name="Burland V."/>
            <person name="Riley M."/>
            <person name="Collado-Vides J."/>
            <person name="Glasner J.D."/>
            <person name="Rode C.K."/>
            <person name="Mayhew G.F."/>
            <person name="Gregor J."/>
            <person name="Davis N.W."/>
            <person name="Kirkpatrick H.A."/>
            <person name="Goeden M.A."/>
            <person name="Rose D.J."/>
            <person name="Mau B."/>
            <person name="Shao Y."/>
        </authorList>
    </citation>
    <scope>NUCLEOTIDE SEQUENCE [LARGE SCALE GENOMIC DNA]</scope>
    <source>
        <strain>K12 / MG1655 / ATCC 47076</strain>
    </source>
</reference>
<reference key="3">
    <citation type="journal article" date="2006" name="Mol. Syst. Biol.">
        <title>Highly accurate genome sequences of Escherichia coli K-12 strains MG1655 and W3110.</title>
        <authorList>
            <person name="Hayashi K."/>
            <person name="Morooka N."/>
            <person name="Yamamoto Y."/>
            <person name="Fujita K."/>
            <person name="Isono K."/>
            <person name="Choi S."/>
            <person name="Ohtsubo E."/>
            <person name="Baba T."/>
            <person name="Wanner B.L."/>
            <person name="Mori H."/>
            <person name="Horiuchi T."/>
        </authorList>
    </citation>
    <scope>NUCLEOTIDE SEQUENCE [LARGE SCALE GENOMIC DNA]</scope>
    <source>
        <strain>K12 / W3110 / ATCC 27325 / DSM 5911</strain>
    </source>
</reference>
<organism>
    <name type="scientific">Escherichia coli (strain K12)</name>
    <dbReference type="NCBI Taxonomy" id="83333"/>
    <lineage>
        <taxon>Bacteria</taxon>
        <taxon>Pseudomonadati</taxon>
        <taxon>Pseudomonadota</taxon>
        <taxon>Gammaproteobacteria</taxon>
        <taxon>Enterobacterales</taxon>
        <taxon>Enterobacteriaceae</taxon>
        <taxon>Escherichia</taxon>
    </lineage>
</organism>
<sequence>MENSRIPGEHFFTTSDNTALFYRHWPALQPGAKKVIVLFHRGHEHSGRLQHLVDELAMPDTAFYAWDARGHGKSSGPRGYSPSLARSVRDVDEFVRFAASDSQVGLEEVVVIAQSVGAVLVATWIHDYAPAIRGLVLASPAFKVKLYVPLARPALALWHRLRGLFFINSYVKGRYLTHDRQRGASFNNDPLITRAIAVNILLDLYKTSERIIRDAAAITLPTQLLISGDDYVVHRQPQIDFYQRLRSPLKELHLLPGFYHDTLGEENRALAFEKMQSFISRLYANKSQKFDYQHEDCTGPSADRWRLLSGGPVPLSPVDLAYRFMRKAMKLFGTHSSGLHLGMSTGFDSGSSLDYVYQNQPQGSNAFGRLVDKIYLNSVGWRGIRQRKTHLQILIKQAVADLHAKGLAVRVVDIAAGHGRYVLDALANEPAVSDILLRDYSELNVAQGQEMIAQRGMSGRVRFEQGDAFNPEELSALTPRPTLAIVSGLYELFPENEQVKNSLAGLANAIEPGGILIYTGQPWHPQLEMIAGVLTSHKDGKPWVMRVRSQGEMDSLVRDAGFDKCTQRIDEWGIFTVSMAVRRDN</sequence>
<name>YNBC_ECOLI</name>
<proteinExistence type="evidence at protein level"/>
<dbReference type="EMBL" id="D85081">
    <property type="protein sequence ID" value="BAA25406.1"/>
    <property type="molecule type" value="Genomic_DNA"/>
</dbReference>
<dbReference type="EMBL" id="U00096">
    <property type="protein sequence ID" value="AAC74492.1"/>
    <property type="molecule type" value="Genomic_DNA"/>
</dbReference>
<dbReference type="EMBL" id="AP009048">
    <property type="protein sequence ID" value="BAE76431.1"/>
    <property type="molecule type" value="Genomic_DNA"/>
</dbReference>
<dbReference type="PIR" id="E64892">
    <property type="entry name" value="E64892"/>
</dbReference>
<dbReference type="RefSeq" id="NP_415928.1">
    <property type="nucleotide sequence ID" value="NC_000913.3"/>
</dbReference>
<dbReference type="RefSeq" id="WP_000431845.1">
    <property type="nucleotide sequence ID" value="NZ_SSZK01000021.1"/>
</dbReference>
<dbReference type="SMR" id="P76092"/>
<dbReference type="BioGRID" id="4263023">
    <property type="interactions" value="21"/>
</dbReference>
<dbReference type="BioGRID" id="850333">
    <property type="interactions" value="3"/>
</dbReference>
<dbReference type="DIP" id="DIP-12744N"/>
<dbReference type="FunCoup" id="P76092">
    <property type="interactions" value="314"/>
</dbReference>
<dbReference type="IntAct" id="P76092">
    <property type="interactions" value="20"/>
</dbReference>
<dbReference type="STRING" id="511145.b1410"/>
<dbReference type="ESTHER" id="ecoli-YNBC">
    <property type="family name" value="Monoglyceridelipase_lysophospholip"/>
</dbReference>
<dbReference type="MEROPS" id="S33.A54"/>
<dbReference type="PaxDb" id="511145-b1410"/>
<dbReference type="EnsemblBacteria" id="AAC74492">
    <property type="protein sequence ID" value="AAC74492"/>
    <property type="gene ID" value="b1410"/>
</dbReference>
<dbReference type="GeneID" id="945970"/>
<dbReference type="KEGG" id="ecj:JW1407"/>
<dbReference type="KEGG" id="eco:b1410"/>
<dbReference type="KEGG" id="ecoc:C3026_08215"/>
<dbReference type="PATRIC" id="fig|1411691.4.peg.861"/>
<dbReference type="EchoBASE" id="EB3513"/>
<dbReference type="eggNOG" id="COG2267">
    <property type="taxonomic scope" value="Bacteria"/>
</dbReference>
<dbReference type="HOGENOM" id="CLU_038914_0_0_6"/>
<dbReference type="InParanoid" id="P76092"/>
<dbReference type="OMA" id="TWAHDYA"/>
<dbReference type="OrthoDB" id="9806902at2"/>
<dbReference type="PhylomeDB" id="P76092"/>
<dbReference type="BioCyc" id="EcoCyc:G6729-MONOMER"/>
<dbReference type="PRO" id="PR:P76092"/>
<dbReference type="Proteomes" id="UP000000625">
    <property type="component" value="Chromosome"/>
</dbReference>
<dbReference type="GO" id="GO:0016020">
    <property type="term" value="C:membrane"/>
    <property type="evidence" value="ECO:0000318"/>
    <property type="project" value="GO_Central"/>
</dbReference>
<dbReference type="GO" id="GO:0016298">
    <property type="term" value="F:lipase activity"/>
    <property type="evidence" value="ECO:0000318"/>
    <property type="project" value="GO_Central"/>
</dbReference>
<dbReference type="CDD" id="cd02440">
    <property type="entry name" value="AdoMet_MTases"/>
    <property type="match status" value="1"/>
</dbReference>
<dbReference type="FunFam" id="3.40.50.1820:FF:000201">
    <property type="entry name" value="Alpha/beta fold hydrolase"/>
    <property type="match status" value="1"/>
</dbReference>
<dbReference type="Gene3D" id="3.40.50.1820">
    <property type="entry name" value="alpha/beta hydrolase"/>
    <property type="match status" value="1"/>
</dbReference>
<dbReference type="Gene3D" id="3.40.50.150">
    <property type="entry name" value="Vaccinia Virus protein VP39"/>
    <property type="match status" value="1"/>
</dbReference>
<dbReference type="InterPro" id="IPR029058">
    <property type="entry name" value="AB_hydrolase_fold"/>
</dbReference>
<dbReference type="InterPro" id="IPR022742">
    <property type="entry name" value="Hydrolase_4"/>
</dbReference>
<dbReference type="InterPro" id="IPR051044">
    <property type="entry name" value="MAG_DAG_Lipase"/>
</dbReference>
<dbReference type="InterPro" id="IPR022744">
    <property type="entry name" value="MeTrfase_dom_put"/>
</dbReference>
<dbReference type="InterPro" id="IPR029063">
    <property type="entry name" value="SAM-dependent_MTases_sf"/>
</dbReference>
<dbReference type="PANTHER" id="PTHR11614">
    <property type="entry name" value="PHOSPHOLIPASE-RELATED"/>
    <property type="match status" value="1"/>
</dbReference>
<dbReference type="Pfam" id="PF12146">
    <property type="entry name" value="Hydrolase_4"/>
    <property type="match status" value="1"/>
</dbReference>
<dbReference type="Pfam" id="PF12147">
    <property type="entry name" value="Methyltransf_20"/>
    <property type="match status" value="1"/>
</dbReference>
<dbReference type="SUPFAM" id="SSF53474">
    <property type="entry name" value="alpha/beta-Hydrolases"/>
    <property type="match status" value="1"/>
</dbReference>
<dbReference type="SUPFAM" id="SSF53335">
    <property type="entry name" value="S-adenosyl-L-methionine-dependent methyltransferases"/>
    <property type="match status" value="1"/>
</dbReference>
<feature type="chain" id="PRO_0000168923" description="Uncharacterized protein YnbC">
    <location>
        <begin position="1"/>
        <end position="585"/>
    </location>
</feature>
<gene>
    <name type="primary">ynbC</name>
    <name type="ordered locus">b1410</name>
    <name type="ordered locus">JW1407</name>
</gene>
<keyword id="KW-1185">Reference proteome</keyword>